<feature type="chain" id="PRO_0000277958" description="tRNA modification GTPase MnmE">
    <location>
        <begin position="1"/>
        <end position="445"/>
    </location>
</feature>
<feature type="domain" description="TrmE-type G">
    <location>
        <begin position="215"/>
        <end position="371"/>
    </location>
</feature>
<feature type="binding site" evidence="1">
    <location>
        <position position="20"/>
    </location>
    <ligand>
        <name>(6S)-5-formyl-5,6,7,8-tetrahydrofolate</name>
        <dbReference type="ChEBI" id="CHEBI:57457"/>
    </ligand>
</feature>
<feature type="binding site" evidence="1">
    <location>
        <position position="79"/>
    </location>
    <ligand>
        <name>(6S)-5-formyl-5,6,7,8-tetrahydrofolate</name>
        <dbReference type="ChEBI" id="CHEBI:57457"/>
    </ligand>
</feature>
<feature type="binding site" evidence="1">
    <location>
        <position position="119"/>
    </location>
    <ligand>
        <name>(6S)-5-formyl-5,6,7,8-tetrahydrofolate</name>
        <dbReference type="ChEBI" id="CHEBI:57457"/>
    </ligand>
</feature>
<feature type="binding site" evidence="1">
    <location>
        <begin position="225"/>
        <end position="230"/>
    </location>
    <ligand>
        <name>GTP</name>
        <dbReference type="ChEBI" id="CHEBI:37565"/>
    </ligand>
</feature>
<feature type="binding site" evidence="1">
    <location>
        <position position="225"/>
    </location>
    <ligand>
        <name>K(+)</name>
        <dbReference type="ChEBI" id="CHEBI:29103"/>
    </ligand>
</feature>
<feature type="binding site" evidence="1">
    <location>
        <position position="229"/>
    </location>
    <ligand>
        <name>Mg(2+)</name>
        <dbReference type="ChEBI" id="CHEBI:18420"/>
    </ligand>
</feature>
<feature type="binding site" evidence="1">
    <location>
        <begin position="244"/>
        <end position="250"/>
    </location>
    <ligand>
        <name>GTP</name>
        <dbReference type="ChEBI" id="CHEBI:37565"/>
    </ligand>
</feature>
<feature type="binding site" evidence="1">
    <location>
        <position position="244"/>
    </location>
    <ligand>
        <name>K(+)</name>
        <dbReference type="ChEBI" id="CHEBI:29103"/>
    </ligand>
</feature>
<feature type="binding site" evidence="1">
    <location>
        <position position="246"/>
    </location>
    <ligand>
        <name>K(+)</name>
        <dbReference type="ChEBI" id="CHEBI:29103"/>
    </ligand>
</feature>
<feature type="binding site" evidence="1">
    <location>
        <position position="249"/>
    </location>
    <ligand>
        <name>K(+)</name>
        <dbReference type="ChEBI" id="CHEBI:29103"/>
    </ligand>
</feature>
<feature type="binding site" evidence="1">
    <location>
        <position position="250"/>
    </location>
    <ligand>
        <name>Mg(2+)</name>
        <dbReference type="ChEBI" id="CHEBI:18420"/>
    </ligand>
</feature>
<feature type="binding site" evidence="1">
    <location>
        <begin position="269"/>
        <end position="272"/>
    </location>
    <ligand>
        <name>GTP</name>
        <dbReference type="ChEBI" id="CHEBI:37565"/>
    </ligand>
</feature>
<feature type="binding site" evidence="1">
    <location>
        <position position="445"/>
    </location>
    <ligand>
        <name>(6S)-5-formyl-5,6,7,8-tetrahydrofolate</name>
        <dbReference type="ChEBI" id="CHEBI:57457"/>
    </ligand>
</feature>
<evidence type="ECO:0000255" key="1">
    <source>
        <dbReference type="HAMAP-Rule" id="MF_00379"/>
    </source>
</evidence>
<comment type="function">
    <text evidence="1">Exhibits a very high intrinsic GTPase hydrolysis rate. Involved in the addition of a carboxymethylaminomethyl (cmnm) group at the wobble position (U34) of certain tRNAs, forming tRNA-cmnm(5)s(2)U34.</text>
</comment>
<comment type="cofactor">
    <cofactor evidence="1">
        <name>K(+)</name>
        <dbReference type="ChEBI" id="CHEBI:29103"/>
    </cofactor>
    <text evidence="1">Binds 1 potassium ion per subunit.</text>
</comment>
<comment type="subunit">
    <text evidence="1">Homodimer. Heterotetramer of two MnmE and two MnmG subunits.</text>
</comment>
<comment type="subcellular location">
    <subcellularLocation>
        <location evidence="1">Cytoplasm</location>
    </subcellularLocation>
</comment>
<comment type="similarity">
    <text evidence="1">Belongs to the TRAFAC class TrmE-Era-EngA-EngB-Septin-like GTPase superfamily. TrmE GTPase family.</text>
</comment>
<gene>
    <name evidence="1" type="primary">mnmE</name>
    <name evidence="1" type="synonym">trmE</name>
    <name type="ordered locus">RBE_0037</name>
</gene>
<accession>Q1RKJ6</accession>
<protein>
    <recommendedName>
        <fullName evidence="1">tRNA modification GTPase MnmE</fullName>
        <ecNumber evidence="1">3.6.-.-</ecNumber>
    </recommendedName>
</protein>
<sequence length="445" mass="49570">METIFAQSSSFGKAGVAVFRVSGTKSLEVLKLLTGKSNFKPRFMYYQKLTSPESNDLIDNAMVVYFKAPNSFTGEDVVEIHTHGSKAISIMLTNALLNIPGVRLAEAGEFTKRAFLNNKFDLTAAEGIADLINAETIMQHKQAIRQAGGALEELYNSWRSQLLRIISLLEAYIDFPDEDIPESVLKDVTNTHKTLINTISEYLNDNRKGELLRSGLKLAIIGPPNAGKSSLLNFLMRRDIAIVSNIAGTTRDIIEGHLDIGGYPIILQDTAGIRGESNDVIEQEGIKRAIDSAKKADIKIVMFDAETLDSAVNEDITGLIDENTIVIINKIDLIPENRIFNIENKYRCLKVSIKNNIALPSILKNIEEIAENMAGFTETPYITNERHRHHLKQALVYLKDFNLDNDLVLATEDIRMTMRRIGAITGIIDVEEILGEIFKNFCIGK</sequence>
<proteinExistence type="inferred from homology"/>
<reference key="1">
    <citation type="journal article" date="2006" name="PLoS Genet.">
        <title>Genome sequence of Rickettsia bellii illuminates the role of amoebae in gene exchanges between intracellular pathogens.</title>
        <authorList>
            <person name="Ogata H."/>
            <person name="La Scola B."/>
            <person name="Audic S."/>
            <person name="Renesto P."/>
            <person name="Blanc G."/>
            <person name="Robert C."/>
            <person name="Fournier P.-E."/>
            <person name="Claverie J.-M."/>
            <person name="Raoult D."/>
        </authorList>
    </citation>
    <scope>NUCLEOTIDE SEQUENCE [LARGE SCALE GENOMIC DNA]</scope>
    <source>
        <strain>RML369-C</strain>
    </source>
</reference>
<organism>
    <name type="scientific">Rickettsia bellii (strain RML369-C)</name>
    <dbReference type="NCBI Taxonomy" id="336407"/>
    <lineage>
        <taxon>Bacteria</taxon>
        <taxon>Pseudomonadati</taxon>
        <taxon>Pseudomonadota</taxon>
        <taxon>Alphaproteobacteria</taxon>
        <taxon>Rickettsiales</taxon>
        <taxon>Rickettsiaceae</taxon>
        <taxon>Rickettsieae</taxon>
        <taxon>Rickettsia</taxon>
        <taxon>belli group</taxon>
    </lineage>
</organism>
<keyword id="KW-0963">Cytoplasm</keyword>
<keyword id="KW-0342">GTP-binding</keyword>
<keyword id="KW-0378">Hydrolase</keyword>
<keyword id="KW-0460">Magnesium</keyword>
<keyword id="KW-0479">Metal-binding</keyword>
<keyword id="KW-0547">Nucleotide-binding</keyword>
<keyword id="KW-0630">Potassium</keyword>
<keyword id="KW-0819">tRNA processing</keyword>
<dbReference type="EC" id="3.6.-.-" evidence="1"/>
<dbReference type="EMBL" id="CP000087">
    <property type="protein sequence ID" value="ABE04118.1"/>
    <property type="molecule type" value="Genomic_DNA"/>
</dbReference>
<dbReference type="RefSeq" id="WP_011476733.1">
    <property type="nucleotide sequence ID" value="NC_007940.1"/>
</dbReference>
<dbReference type="SMR" id="Q1RKJ6"/>
<dbReference type="KEGG" id="rbe:RBE_0037"/>
<dbReference type="eggNOG" id="COG0486">
    <property type="taxonomic scope" value="Bacteria"/>
</dbReference>
<dbReference type="HOGENOM" id="CLU_019624_3_1_5"/>
<dbReference type="OrthoDB" id="9805918at2"/>
<dbReference type="Proteomes" id="UP000001951">
    <property type="component" value="Chromosome"/>
</dbReference>
<dbReference type="GO" id="GO:0005737">
    <property type="term" value="C:cytoplasm"/>
    <property type="evidence" value="ECO:0007669"/>
    <property type="project" value="UniProtKB-SubCell"/>
</dbReference>
<dbReference type="GO" id="GO:0005525">
    <property type="term" value="F:GTP binding"/>
    <property type="evidence" value="ECO:0007669"/>
    <property type="project" value="UniProtKB-UniRule"/>
</dbReference>
<dbReference type="GO" id="GO:0003924">
    <property type="term" value="F:GTPase activity"/>
    <property type="evidence" value="ECO:0007669"/>
    <property type="project" value="UniProtKB-UniRule"/>
</dbReference>
<dbReference type="GO" id="GO:0046872">
    <property type="term" value="F:metal ion binding"/>
    <property type="evidence" value="ECO:0007669"/>
    <property type="project" value="UniProtKB-KW"/>
</dbReference>
<dbReference type="GO" id="GO:0030488">
    <property type="term" value="P:tRNA methylation"/>
    <property type="evidence" value="ECO:0007669"/>
    <property type="project" value="TreeGrafter"/>
</dbReference>
<dbReference type="GO" id="GO:0002098">
    <property type="term" value="P:tRNA wobble uridine modification"/>
    <property type="evidence" value="ECO:0007669"/>
    <property type="project" value="TreeGrafter"/>
</dbReference>
<dbReference type="CDD" id="cd04164">
    <property type="entry name" value="trmE"/>
    <property type="match status" value="1"/>
</dbReference>
<dbReference type="CDD" id="cd14858">
    <property type="entry name" value="TrmE_N"/>
    <property type="match status" value="1"/>
</dbReference>
<dbReference type="FunFam" id="3.30.1360.120:FF:000007">
    <property type="entry name" value="tRNA modification GTPase GTPBP3, mitochondrial"/>
    <property type="match status" value="1"/>
</dbReference>
<dbReference type="Gene3D" id="3.40.50.300">
    <property type="entry name" value="P-loop containing nucleotide triphosphate hydrolases"/>
    <property type="match status" value="1"/>
</dbReference>
<dbReference type="Gene3D" id="3.30.1360.120">
    <property type="entry name" value="Probable tRNA modification gtpase trme, domain 1"/>
    <property type="match status" value="1"/>
</dbReference>
<dbReference type="Gene3D" id="1.20.120.430">
    <property type="entry name" value="tRNA modification GTPase MnmE domain 2"/>
    <property type="match status" value="1"/>
</dbReference>
<dbReference type="HAMAP" id="MF_00379">
    <property type="entry name" value="GTPase_MnmE"/>
    <property type="match status" value="1"/>
</dbReference>
<dbReference type="InterPro" id="IPR031168">
    <property type="entry name" value="G_TrmE"/>
</dbReference>
<dbReference type="InterPro" id="IPR006073">
    <property type="entry name" value="GTP-bd"/>
</dbReference>
<dbReference type="InterPro" id="IPR018948">
    <property type="entry name" value="GTP-bd_TrmE_N"/>
</dbReference>
<dbReference type="InterPro" id="IPR004520">
    <property type="entry name" value="GTPase_MnmE"/>
</dbReference>
<dbReference type="InterPro" id="IPR027368">
    <property type="entry name" value="MnmE_dom2"/>
</dbReference>
<dbReference type="InterPro" id="IPR025867">
    <property type="entry name" value="MnmE_helical"/>
</dbReference>
<dbReference type="InterPro" id="IPR027417">
    <property type="entry name" value="P-loop_NTPase"/>
</dbReference>
<dbReference type="InterPro" id="IPR005225">
    <property type="entry name" value="Small_GTP-bd"/>
</dbReference>
<dbReference type="InterPro" id="IPR027266">
    <property type="entry name" value="TrmE/GcvT_dom1"/>
</dbReference>
<dbReference type="NCBIfam" id="TIGR00450">
    <property type="entry name" value="mnmE_trmE_thdF"/>
    <property type="match status" value="1"/>
</dbReference>
<dbReference type="NCBIfam" id="NF003661">
    <property type="entry name" value="PRK05291.1-3"/>
    <property type="match status" value="1"/>
</dbReference>
<dbReference type="NCBIfam" id="TIGR00231">
    <property type="entry name" value="small_GTP"/>
    <property type="match status" value="1"/>
</dbReference>
<dbReference type="PANTHER" id="PTHR42714">
    <property type="entry name" value="TRNA MODIFICATION GTPASE GTPBP3"/>
    <property type="match status" value="1"/>
</dbReference>
<dbReference type="PANTHER" id="PTHR42714:SF2">
    <property type="entry name" value="TRNA MODIFICATION GTPASE GTPBP3, MITOCHONDRIAL"/>
    <property type="match status" value="1"/>
</dbReference>
<dbReference type="Pfam" id="PF01926">
    <property type="entry name" value="MMR_HSR1"/>
    <property type="match status" value="1"/>
</dbReference>
<dbReference type="Pfam" id="PF12631">
    <property type="entry name" value="MnmE_helical"/>
    <property type="match status" value="1"/>
</dbReference>
<dbReference type="Pfam" id="PF10396">
    <property type="entry name" value="TrmE_N"/>
    <property type="match status" value="1"/>
</dbReference>
<dbReference type="SUPFAM" id="SSF52540">
    <property type="entry name" value="P-loop containing nucleoside triphosphate hydrolases"/>
    <property type="match status" value="1"/>
</dbReference>
<dbReference type="SUPFAM" id="SSF116878">
    <property type="entry name" value="TrmE connector domain"/>
    <property type="match status" value="1"/>
</dbReference>
<dbReference type="PROSITE" id="PS51709">
    <property type="entry name" value="G_TRME"/>
    <property type="match status" value="1"/>
</dbReference>
<name>MNME_RICBR</name>